<dbReference type="EMBL" id="CR925677">
    <property type="protein sequence ID" value="CAI27537.1"/>
    <property type="status" value="ALT_INIT"/>
    <property type="molecule type" value="Genomic_DNA"/>
</dbReference>
<dbReference type="SMR" id="Q5FFA2"/>
<dbReference type="KEGG" id="erg:ERGA_CDS_00850"/>
<dbReference type="HOGENOM" id="CLU_075939_0_1_5"/>
<dbReference type="Proteomes" id="UP000000533">
    <property type="component" value="Chromosome"/>
</dbReference>
<dbReference type="GO" id="GO:0022625">
    <property type="term" value="C:cytosolic large ribosomal subunit"/>
    <property type="evidence" value="ECO:0007669"/>
    <property type="project" value="TreeGrafter"/>
</dbReference>
<dbReference type="GO" id="GO:0008097">
    <property type="term" value="F:5S rRNA binding"/>
    <property type="evidence" value="ECO:0007669"/>
    <property type="project" value="InterPro"/>
</dbReference>
<dbReference type="GO" id="GO:0003735">
    <property type="term" value="F:structural constituent of ribosome"/>
    <property type="evidence" value="ECO:0007669"/>
    <property type="project" value="InterPro"/>
</dbReference>
<dbReference type="GO" id="GO:0006412">
    <property type="term" value="P:translation"/>
    <property type="evidence" value="ECO:0007669"/>
    <property type="project" value="UniProtKB-UniRule"/>
</dbReference>
<dbReference type="CDD" id="cd00495">
    <property type="entry name" value="Ribosomal_L25_TL5_CTC"/>
    <property type="match status" value="1"/>
</dbReference>
<dbReference type="Gene3D" id="2.170.120.20">
    <property type="entry name" value="Ribosomal protein L25, beta domain"/>
    <property type="match status" value="1"/>
</dbReference>
<dbReference type="Gene3D" id="2.40.240.10">
    <property type="entry name" value="Ribosomal Protein L25, Chain P"/>
    <property type="match status" value="1"/>
</dbReference>
<dbReference type="HAMAP" id="MF_01334">
    <property type="entry name" value="Ribosomal_bL25_CTC"/>
    <property type="match status" value="1"/>
</dbReference>
<dbReference type="InterPro" id="IPR020056">
    <property type="entry name" value="Rbsml_bL25/Gln-tRNA_synth_N"/>
</dbReference>
<dbReference type="InterPro" id="IPR011035">
    <property type="entry name" value="Ribosomal_bL25/Gln-tRNA_synth"/>
</dbReference>
<dbReference type="InterPro" id="IPR020057">
    <property type="entry name" value="Ribosomal_bL25_b-dom"/>
</dbReference>
<dbReference type="InterPro" id="IPR037121">
    <property type="entry name" value="Ribosomal_bL25_C"/>
</dbReference>
<dbReference type="InterPro" id="IPR001021">
    <property type="entry name" value="Ribosomal_bL25_long"/>
</dbReference>
<dbReference type="InterPro" id="IPR029751">
    <property type="entry name" value="Ribosomal_L25_dom"/>
</dbReference>
<dbReference type="InterPro" id="IPR020930">
    <property type="entry name" value="Ribosomal_uL5_bac-type"/>
</dbReference>
<dbReference type="NCBIfam" id="TIGR00731">
    <property type="entry name" value="bL25_bact_ctc"/>
    <property type="match status" value="1"/>
</dbReference>
<dbReference type="NCBIfam" id="NF004128">
    <property type="entry name" value="PRK05618.1-2"/>
    <property type="match status" value="1"/>
</dbReference>
<dbReference type="NCBIfam" id="NF004612">
    <property type="entry name" value="PRK05943.1"/>
    <property type="match status" value="1"/>
</dbReference>
<dbReference type="PANTHER" id="PTHR33284">
    <property type="entry name" value="RIBOSOMAL PROTEIN L25/GLN-TRNA SYNTHETASE, ANTI-CODON-BINDING DOMAIN-CONTAINING PROTEIN"/>
    <property type="match status" value="1"/>
</dbReference>
<dbReference type="PANTHER" id="PTHR33284:SF1">
    <property type="entry name" value="RIBOSOMAL PROTEIN L25_GLN-TRNA SYNTHETASE, ANTI-CODON-BINDING DOMAIN-CONTAINING PROTEIN"/>
    <property type="match status" value="1"/>
</dbReference>
<dbReference type="Pfam" id="PF01386">
    <property type="entry name" value="Ribosomal_L25p"/>
    <property type="match status" value="1"/>
</dbReference>
<dbReference type="Pfam" id="PF14693">
    <property type="entry name" value="Ribosomal_TL5_C"/>
    <property type="match status" value="1"/>
</dbReference>
<dbReference type="SUPFAM" id="SSF50715">
    <property type="entry name" value="Ribosomal protein L25-like"/>
    <property type="match status" value="1"/>
</dbReference>
<proteinExistence type="inferred from homology"/>
<accession>Q5FFA2</accession>
<organism>
    <name type="scientific">Ehrlichia ruminantium (strain Gardel)</name>
    <dbReference type="NCBI Taxonomy" id="302409"/>
    <lineage>
        <taxon>Bacteria</taxon>
        <taxon>Pseudomonadati</taxon>
        <taxon>Pseudomonadota</taxon>
        <taxon>Alphaproteobacteria</taxon>
        <taxon>Rickettsiales</taxon>
        <taxon>Anaplasmataceae</taxon>
        <taxon>Ehrlichia</taxon>
    </lineage>
</organism>
<feature type="chain" id="PRO_0000181546" description="Large ribosomal subunit protein bL25">
    <location>
        <begin position="1"/>
        <end position="208"/>
    </location>
</feature>
<feature type="region of interest" description="Disordered" evidence="2">
    <location>
        <begin position="184"/>
        <end position="208"/>
    </location>
</feature>
<feature type="compositionally biased region" description="Low complexity" evidence="2">
    <location>
        <begin position="187"/>
        <end position="208"/>
    </location>
</feature>
<sequence>MTDQTIVKMNAELRNSVGTGPSRTLRRNGAIPAVVYGKHRSPLSIYLSDREFLSKYRSAALSTHLIELEIGEKKEYVLMRDIQKHPVTDRIQHVDFQFIDHGTEIKIEVPLVFVNEQRCVGVKKGGVLNILHRTLHIKCLPNAILQSIEVDLANLTIGHSIHVSDLNLPSEVTVVMKEHNPTLVTISGTSSDQDTSGGESSGTTTSED</sequence>
<comment type="function">
    <text evidence="1">This is one of the proteins that binds to the 5S RNA in the ribosome where it forms part of the central protuberance.</text>
</comment>
<comment type="subunit">
    <text evidence="1">Part of the 50S ribosomal subunit; part of the 5S rRNA/L5/L18/L25 subcomplex. Contacts the 5S rRNA. Binds to the 5S rRNA independently of L5 and L18.</text>
</comment>
<comment type="similarity">
    <text evidence="1">Belongs to the bacterial ribosomal protein bL25 family. CTC subfamily.</text>
</comment>
<comment type="sequence caution" evidence="3">
    <conflict type="erroneous initiation">
        <sequence resource="EMBL-CDS" id="CAI27537"/>
    </conflict>
</comment>
<reference key="1">
    <citation type="journal article" date="2006" name="J. Bacteriol.">
        <title>Comparative genomic analysis of three strains of Ehrlichia ruminantium reveals an active process of genome size plasticity.</title>
        <authorList>
            <person name="Frutos R."/>
            <person name="Viari A."/>
            <person name="Ferraz C."/>
            <person name="Morgat A."/>
            <person name="Eychenie S."/>
            <person name="Kandassamy Y."/>
            <person name="Chantal I."/>
            <person name="Bensaid A."/>
            <person name="Coissac E."/>
            <person name="Vachiery N."/>
            <person name="Demaille J."/>
            <person name="Martinez D."/>
        </authorList>
    </citation>
    <scope>NUCLEOTIDE SEQUENCE [LARGE SCALE GENOMIC DNA]</scope>
    <source>
        <strain>Gardel</strain>
    </source>
</reference>
<evidence type="ECO:0000255" key="1">
    <source>
        <dbReference type="HAMAP-Rule" id="MF_01334"/>
    </source>
</evidence>
<evidence type="ECO:0000256" key="2">
    <source>
        <dbReference type="SAM" id="MobiDB-lite"/>
    </source>
</evidence>
<evidence type="ECO:0000305" key="3"/>
<keyword id="KW-0687">Ribonucleoprotein</keyword>
<keyword id="KW-0689">Ribosomal protein</keyword>
<keyword id="KW-0694">RNA-binding</keyword>
<keyword id="KW-0699">rRNA-binding</keyword>
<protein>
    <recommendedName>
        <fullName evidence="1">Large ribosomal subunit protein bL25</fullName>
    </recommendedName>
    <alternativeName>
        <fullName evidence="3">50S ribosomal protein L25</fullName>
    </alternativeName>
    <alternativeName>
        <fullName evidence="1">General stress protein CTC</fullName>
    </alternativeName>
</protein>
<gene>
    <name evidence="1" type="primary">rplY</name>
    <name evidence="1" type="synonym">ctc</name>
    <name type="ordered locus">ERGA_CDS_00850</name>
</gene>
<name>RL25_EHRRG</name>